<evidence type="ECO:0000255" key="1">
    <source>
        <dbReference type="HAMAP-Rule" id="MF_00201"/>
    </source>
</evidence>
<reference key="1">
    <citation type="journal article" date="2005" name="J. Bacteriol.">
        <title>Insights into genome plasticity and pathogenicity of the plant pathogenic Bacterium Xanthomonas campestris pv. vesicatoria revealed by the complete genome sequence.</title>
        <authorList>
            <person name="Thieme F."/>
            <person name="Koebnik R."/>
            <person name="Bekel T."/>
            <person name="Berger C."/>
            <person name="Boch J."/>
            <person name="Buettner D."/>
            <person name="Caldana C."/>
            <person name="Gaigalat L."/>
            <person name="Goesmann A."/>
            <person name="Kay S."/>
            <person name="Kirchner O."/>
            <person name="Lanz C."/>
            <person name="Linke B."/>
            <person name="McHardy A.C."/>
            <person name="Meyer F."/>
            <person name="Mittenhuber G."/>
            <person name="Nies D.H."/>
            <person name="Niesbach-Kloesgen U."/>
            <person name="Patschkowski T."/>
            <person name="Rueckert C."/>
            <person name="Rupp O."/>
            <person name="Schneiker S."/>
            <person name="Schuster S.C."/>
            <person name="Vorhoelter F.J."/>
            <person name="Weber E."/>
            <person name="Puehler A."/>
            <person name="Bonas U."/>
            <person name="Bartels D."/>
            <person name="Kaiser O."/>
        </authorList>
    </citation>
    <scope>NUCLEOTIDE SEQUENCE [LARGE SCALE GENOMIC DNA]</scope>
    <source>
        <strain>85-10</strain>
    </source>
</reference>
<organism>
    <name type="scientific">Xanthomonas euvesicatoria pv. vesicatoria (strain 85-10)</name>
    <name type="common">Xanthomonas campestris pv. vesicatoria</name>
    <dbReference type="NCBI Taxonomy" id="316273"/>
    <lineage>
        <taxon>Bacteria</taxon>
        <taxon>Pseudomonadati</taxon>
        <taxon>Pseudomonadota</taxon>
        <taxon>Gammaproteobacteria</taxon>
        <taxon>Lysobacterales</taxon>
        <taxon>Lysobacteraceae</taxon>
        <taxon>Xanthomonas</taxon>
    </lineage>
</organism>
<comment type="function">
    <text evidence="1">Involved in DNA repair and RecF pathway recombination.</text>
</comment>
<comment type="similarity">
    <text evidence="1">Belongs to the RecO family.</text>
</comment>
<sequence length="240" mass="26927">MLIEHERGFVLHVRAWRETSLLVEVLTEQHGRVGLLARGVQGPRKQALRAALQPLQLIQFSAVQRGELAQLRQAEALDTAPRLVGDTMLAGFYISELLLRLAPRNDPVPELYACYAQARTYLASDLPLAWGLRRFERDVLDGLGFAFDLQHDSDGQPIDPAARYRLDPQEGALRVLSERLAQDRRETVTGAALLALGEDVMPDADDMPGLRRSMRGVLLHHLGGRGLKSWQMLEDLARRR</sequence>
<protein>
    <recommendedName>
        <fullName evidence="1">DNA repair protein RecO</fullName>
    </recommendedName>
    <alternativeName>
        <fullName evidence="1">Recombination protein O</fullName>
    </alternativeName>
</protein>
<keyword id="KW-0227">DNA damage</keyword>
<keyword id="KW-0233">DNA recombination</keyword>
<keyword id="KW-0234">DNA repair</keyword>
<name>RECO_XANE5</name>
<dbReference type="EMBL" id="AM039952">
    <property type="protein sequence ID" value="CAJ23010.1"/>
    <property type="molecule type" value="Genomic_DNA"/>
</dbReference>
<dbReference type="RefSeq" id="WP_008574279.1">
    <property type="nucleotide sequence ID" value="NZ_CP017190.1"/>
</dbReference>
<dbReference type="SMR" id="Q3BVV3"/>
<dbReference type="STRING" id="456327.BJD11_15770"/>
<dbReference type="GeneID" id="97509676"/>
<dbReference type="KEGG" id="xcv:XCV1379"/>
<dbReference type="eggNOG" id="COG1381">
    <property type="taxonomic scope" value="Bacteria"/>
</dbReference>
<dbReference type="HOGENOM" id="CLU_066645_1_0_6"/>
<dbReference type="Proteomes" id="UP000007069">
    <property type="component" value="Chromosome"/>
</dbReference>
<dbReference type="GO" id="GO:0043590">
    <property type="term" value="C:bacterial nucleoid"/>
    <property type="evidence" value="ECO:0007669"/>
    <property type="project" value="TreeGrafter"/>
</dbReference>
<dbReference type="GO" id="GO:0006310">
    <property type="term" value="P:DNA recombination"/>
    <property type="evidence" value="ECO:0007669"/>
    <property type="project" value="UniProtKB-UniRule"/>
</dbReference>
<dbReference type="GO" id="GO:0006302">
    <property type="term" value="P:double-strand break repair"/>
    <property type="evidence" value="ECO:0007669"/>
    <property type="project" value="TreeGrafter"/>
</dbReference>
<dbReference type="Gene3D" id="2.40.50.140">
    <property type="entry name" value="Nucleic acid-binding proteins"/>
    <property type="match status" value="1"/>
</dbReference>
<dbReference type="Gene3D" id="1.20.1440.120">
    <property type="entry name" value="Recombination protein O, C-terminal domain"/>
    <property type="match status" value="1"/>
</dbReference>
<dbReference type="HAMAP" id="MF_00201">
    <property type="entry name" value="RecO"/>
    <property type="match status" value="1"/>
</dbReference>
<dbReference type="InterPro" id="IPR037278">
    <property type="entry name" value="ARFGAP/RecO"/>
</dbReference>
<dbReference type="InterPro" id="IPR022572">
    <property type="entry name" value="DNA_rep/recomb_RecO_N"/>
</dbReference>
<dbReference type="InterPro" id="IPR012340">
    <property type="entry name" value="NA-bd_OB-fold"/>
</dbReference>
<dbReference type="InterPro" id="IPR003717">
    <property type="entry name" value="RecO"/>
</dbReference>
<dbReference type="InterPro" id="IPR042242">
    <property type="entry name" value="RecO_C"/>
</dbReference>
<dbReference type="NCBIfam" id="TIGR00613">
    <property type="entry name" value="reco"/>
    <property type="match status" value="1"/>
</dbReference>
<dbReference type="PANTHER" id="PTHR33991">
    <property type="entry name" value="DNA REPAIR PROTEIN RECO"/>
    <property type="match status" value="1"/>
</dbReference>
<dbReference type="PANTHER" id="PTHR33991:SF1">
    <property type="entry name" value="DNA REPAIR PROTEIN RECO"/>
    <property type="match status" value="1"/>
</dbReference>
<dbReference type="Pfam" id="PF02565">
    <property type="entry name" value="RecO_C"/>
    <property type="match status" value="1"/>
</dbReference>
<dbReference type="Pfam" id="PF11967">
    <property type="entry name" value="RecO_N"/>
    <property type="match status" value="1"/>
</dbReference>
<dbReference type="SUPFAM" id="SSF57863">
    <property type="entry name" value="ArfGap/RecO-like zinc finger"/>
    <property type="match status" value="1"/>
</dbReference>
<dbReference type="SUPFAM" id="SSF50249">
    <property type="entry name" value="Nucleic acid-binding proteins"/>
    <property type="match status" value="1"/>
</dbReference>
<accession>Q3BVV3</accession>
<feature type="chain" id="PRO_0000227062" description="DNA repair protein RecO">
    <location>
        <begin position="1"/>
        <end position="240"/>
    </location>
</feature>
<gene>
    <name evidence="1" type="primary">recO</name>
    <name type="ordered locus">XCV1379</name>
</gene>
<proteinExistence type="inferred from homology"/>